<gene>
    <name type="primary">ebrA</name>
</gene>
<evidence type="ECO:0000255" key="1"/>
<evidence type="ECO:0000269" key="2">
    <source>
    </source>
</evidence>
<evidence type="ECO:0000305" key="3"/>
<evidence type="ECO:0000305" key="4">
    <source>
    </source>
</evidence>
<sequence>MLVGYIFLTIAICSESIGAAMLKVSDGFKKWKPSALVVIAYSLAFYMLSLTLNHIPLSLSYATWSGVGTVLTAVIGVKWFKEELNAKGLIGILLLISGVVLLNWQ</sequence>
<protein>
    <recommendedName>
        <fullName>Multidrug resistance protein EbrA</fullName>
    </recommendedName>
</protein>
<comment type="function">
    <text evidence="2">Part of a multidrug efflux pump. Confers resistance to cationic lipophilic dyes such as ethidium bromide, acriflavine, pyronine Y and safranin O. The efflux is probably coupled to an influx of protons.</text>
</comment>
<comment type="subunit">
    <text evidence="4">The efflux pump is composed of EbrA and EbrB.</text>
</comment>
<comment type="subcellular location">
    <subcellularLocation>
        <location evidence="3">Cell membrane</location>
        <topology evidence="3">Multi-pass membrane protein</topology>
    </subcellularLocation>
</comment>
<comment type="similarity">
    <text evidence="3">Belongs to the drug/metabolite transporter (DMT) superfamily. Small multidrug resistance (SMR) (TC 2.A.7.1) family. EbrA/EbrB subfamily.</text>
</comment>
<name>EBRA_BACAT</name>
<organism>
    <name type="scientific">Bacillus atrophaeus</name>
    <dbReference type="NCBI Taxonomy" id="1452"/>
    <lineage>
        <taxon>Bacteria</taxon>
        <taxon>Bacillati</taxon>
        <taxon>Bacillota</taxon>
        <taxon>Bacilli</taxon>
        <taxon>Bacillales</taxon>
        <taxon>Bacillaceae</taxon>
        <taxon>Bacillus</taxon>
    </lineage>
</organism>
<dbReference type="EMBL" id="AB029306">
    <property type="protein sequence ID" value="BAA88575.1"/>
    <property type="molecule type" value="Genomic_DNA"/>
</dbReference>
<dbReference type="SMR" id="P0CW81"/>
<dbReference type="STRING" id="1452.TD68_05905"/>
<dbReference type="GO" id="GO:0005886">
    <property type="term" value="C:plasma membrane"/>
    <property type="evidence" value="ECO:0007669"/>
    <property type="project" value="UniProtKB-SubCell"/>
</dbReference>
<dbReference type="GO" id="GO:0022857">
    <property type="term" value="F:transmembrane transporter activity"/>
    <property type="evidence" value="ECO:0007669"/>
    <property type="project" value="InterPro"/>
</dbReference>
<dbReference type="FunFam" id="1.10.3730.20:FF:000046">
    <property type="entry name" value="Small multidrug resistance efflux transporter"/>
    <property type="match status" value="1"/>
</dbReference>
<dbReference type="Gene3D" id="1.10.3730.20">
    <property type="match status" value="1"/>
</dbReference>
<dbReference type="InterPro" id="IPR000390">
    <property type="entry name" value="Small_drug/metabolite_transptr"/>
</dbReference>
<dbReference type="InterPro" id="IPR045324">
    <property type="entry name" value="Small_multidrug_res"/>
</dbReference>
<dbReference type="PANTHER" id="PTHR30561:SF1">
    <property type="entry name" value="MULTIDRUG TRANSPORTER EMRE"/>
    <property type="match status" value="1"/>
</dbReference>
<dbReference type="PANTHER" id="PTHR30561">
    <property type="entry name" value="SMR FAMILY PROTON-DEPENDENT DRUG EFFLUX TRANSPORTER SUGE"/>
    <property type="match status" value="1"/>
</dbReference>
<dbReference type="Pfam" id="PF00893">
    <property type="entry name" value="Multi_Drug_Res"/>
    <property type="match status" value="1"/>
</dbReference>
<dbReference type="SUPFAM" id="SSF103481">
    <property type="entry name" value="Multidrug resistance efflux transporter EmrE"/>
    <property type="match status" value="1"/>
</dbReference>
<reference key="1">
    <citation type="journal article" date="2000" name="J. Bacteriol.">
        <title>A two-component multidrug efflux pump, EbrAB, in Bacillus subtilis.</title>
        <authorList>
            <person name="Masaoka Y."/>
            <person name="Ueno Y."/>
            <person name="Morita Y."/>
            <person name="Kuroda T."/>
            <person name="Mizushima T."/>
            <person name="Tsuchiya T."/>
        </authorList>
    </citation>
    <scope>NUCLEOTIDE SEQUENCE [GENOMIC DNA]</scope>
    <scope>FUNCTION</scope>
    <scope>SUBUNIT</scope>
    <source>
        <strain>ATCC 9372 / DSM 675 / NBRC 13721 / NCIMB 8058 / NRS 1221A</strain>
    </source>
</reference>
<feature type="chain" id="PRO_0000408956" description="Multidrug resistance protein EbrA">
    <location>
        <begin position="1"/>
        <end position="105"/>
    </location>
</feature>
<feature type="transmembrane region" description="Helical" evidence="1">
    <location>
        <begin position="2"/>
        <end position="22"/>
    </location>
</feature>
<feature type="transmembrane region" description="Helical" evidence="1">
    <location>
        <begin position="35"/>
        <end position="55"/>
    </location>
</feature>
<feature type="transmembrane region" description="Helical" evidence="1">
    <location>
        <begin position="57"/>
        <end position="77"/>
    </location>
</feature>
<feature type="transmembrane region" description="Helical" evidence="1">
    <location>
        <begin position="84"/>
        <end position="104"/>
    </location>
</feature>
<accession>P0CW81</accession>
<accession>O31792</accession>
<accession>Q9R9I0</accession>
<proteinExistence type="evidence at protein level"/>
<keyword id="KW-1003">Cell membrane</keyword>
<keyword id="KW-0472">Membrane</keyword>
<keyword id="KW-0812">Transmembrane</keyword>
<keyword id="KW-1133">Transmembrane helix</keyword>
<keyword id="KW-0813">Transport</keyword>